<dbReference type="EC" id="3.1.26.4" evidence="1"/>
<dbReference type="EMBL" id="AM260525">
    <property type="protein sequence ID" value="CAK01091.1"/>
    <property type="molecule type" value="Genomic_DNA"/>
</dbReference>
<dbReference type="RefSeq" id="WP_012231196.1">
    <property type="nucleotide sequence ID" value="NC_010161.1"/>
</dbReference>
<dbReference type="SMR" id="A9IQR5"/>
<dbReference type="KEGG" id="btr:BT_0657"/>
<dbReference type="eggNOG" id="COG0328">
    <property type="taxonomic scope" value="Bacteria"/>
</dbReference>
<dbReference type="HOGENOM" id="CLU_030894_6_0_5"/>
<dbReference type="Proteomes" id="UP000001592">
    <property type="component" value="Chromosome"/>
</dbReference>
<dbReference type="GO" id="GO:0005737">
    <property type="term" value="C:cytoplasm"/>
    <property type="evidence" value="ECO:0007669"/>
    <property type="project" value="UniProtKB-SubCell"/>
</dbReference>
<dbReference type="GO" id="GO:0000287">
    <property type="term" value="F:magnesium ion binding"/>
    <property type="evidence" value="ECO:0007669"/>
    <property type="project" value="UniProtKB-UniRule"/>
</dbReference>
<dbReference type="GO" id="GO:0003676">
    <property type="term" value="F:nucleic acid binding"/>
    <property type="evidence" value="ECO:0007669"/>
    <property type="project" value="InterPro"/>
</dbReference>
<dbReference type="GO" id="GO:0004523">
    <property type="term" value="F:RNA-DNA hybrid ribonuclease activity"/>
    <property type="evidence" value="ECO:0007669"/>
    <property type="project" value="UniProtKB-UniRule"/>
</dbReference>
<dbReference type="GO" id="GO:0043137">
    <property type="term" value="P:DNA replication, removal of RNA primer"/>
    <property type="evidence" value="ECO:0007669"/>
    <property type="project" value="TreeGrafter"/>
</dbReference>
<dbReference type="CDD" id="cd09278">
    <property type="entry name" value="RNase_HI_prokaryote_like"/>
    <property type="match status" value="1"/>
</dbReference>
<dbReference type="FunFam" id="3.30.420.10:FF:000089">
    <property type="entry name" value="Ribonuclease H"/>
    <property type="match status" value="1"/>
</dbReference>
<dbReference type="Gene3D" id="3.30.420.10">
    <property type="entry name" value="Ribonuclease H-like superfamily/Ribonuclease H"/>
    <property type="match status" value="1"/>
</dbReference>
<dbReference type="HAMAP" id="MF_00042">
    <property type="entry name" value="RNase_H"/>
    <property type="match status" value="1"/>
</dbReference>
<dbReference type="InterPro" id="IPR050092">
    <property type="entry name" value="RNase_H"/>
</dbReference>
<dbReference type="InterPro" id="IPR012337">
    <property type="entry name" value="RNaseH-like_sf"/>
</dbReference>
<dbReference type="InterPro" id="IPR002156">
    <property type="entry name" value="RNaseH_domain"/>
</dbReference>
<dbReference type="InterPro" id="IPR036397">
    <property type="entry name" value="RNaseH_sf"/>
</dbReference>
<dbReference type="InterPro" id="IPR022892">
    <property type="entry name" value="RNaseHI"/>
</dbReference>
<dbReference type="NCBIfam" id="NF001236">
    <property type="entry name" value="PRK00203.1"/>
    <property type="match status" value="1"/>
</dbReference>
<dbReference type="PANTHER" id="PTHR10642">
    <property type="entry name" value="RIBONUCLEASE H1"/>
    <property type="match status" value="1"/>
</dbReference>
<dbReference type="PANTHER" id="PTHR10642:SF26">
    <property type="entry name" value="RIBONUCLEASE H1"/>
    <property type="match status" value="1"/>
</dbReference>
<dbReference type="Pfam" id="PF00075">
    <property type="entry name" value="RNase_H"/>
    <property type="match status" value="1"/>
</dbReference>
<dbReference type="SUPFAM" id="SSF53098">
    <property type="entry name" value="Ribonuclease H-like"/>
    <property type="match status" value="1"/>
</dbReference>
<dbReference type="PROSITE" id="PS50879">
    <property type="entry name" value="RNASE_H_1"/>
    <property type="match status" value="1"/>
</dbReference>
<name>RNH_BART1</name>
<feature type="chain" id="PRO_0000332563" description="Ribonuclease H">
    <location>
        <begin position="1"/>
        <end position="155"/>
    </location>
</feature>
<feature type="domain" description="RNase H type-1" evidence="2">
    <location>
        <begin position="4"/>
        <end position="145"/>
    </location>
</feature>
<feature type="binding site" evidence="1">
    <location>
        <position position="13"/>
    </location>
    <ligand>
        <name>Mg(2+)</name>
        <dbReference type="ChEBI" id="CHEBI:18420"/>
        <label>1</label>
    </ligand>
</feature>
<feature type="binding site" evidence="1">
    <location>
        <position position="13"/>
    </location>
    <ligand>
        <name>Mg(2+)</name>
        <dbReference type="ChEBI" id="CHEBI:18420"/>
        <label>2</label>
    </ligand>
</feature>
<feature type="binding site" evidence="1">
    <location>
        <position position="51"/>
    </location>
    <ligand>
        <name>Mg(2+)</name>
        <dbReference type="ChEBI" id="CHEBI:18420"/>
        <label>1</label>
    </ligand>
</feature>
<feature type="binding site" evidence="1">
    <location>
        <position position="73"/>
    </location>
    <ligand>
        <name>Mg(2+)</name>
        <dbReference type="ChEBI" id="CHEBI:18420"/>
        <label>1</label>
    </ligand>
</feature>
<feature type="binding site" evidence="1">
    <location>
        <position position="137"/>
    </location>
    <ligand>
        <name>Mg(2+)</name>
        <dbReference type="ChEBI" id="CHEBI:18420"/>
        <label>2</label>
    </ligand>
</feature>
<comment type="function">
    <text evidence="1">Endonuclease that specifically degrades the RNA of RNA-DNA hybrids.</text>
</comment>
<comment type="catalytic activity">
    <reaction evidence="1">
        <text>Endonucleolytic cleavage to 5'-phosphomonoester.</text>
        <dbReference type="EC" id="3.1.26.4"/>
    </reaction>
</comment>
<comment type="cofactor">
    <cofactor evidence="1">
        <name>Mg(2+)</name>
        <dbReference type="ChEBI" id="CHEBI:18420"/>
    </cofactor>
    <text evidence="1">Binds 1 Mg(2+) ion per subunit. May bind a second metal ion at a regulatory site, or after substrate binding.</text>
</comment>
<comment type="subunit">
    <text evidence="1">Monomer.</text>
</comment>
<comment type="subcellular location">
    <subcellularLocation>
        <location evidence="1">Cytoplasm</location>
    </subcellularLocation>
</comment>
<comment type="similarity">
    <text evidence="1">Belongs to the RNase H family.</text>
</comment>
<gene>
    <name evidence="1" type="primary">rnhA</name>
    <name type="ordered locus">BT_0657</name>
</gene>
<reference key="1">
    <citation type="journal article" date="2007" name="Nat. Genet.">
        <title>Genomic analysis of Bartonella identifies type IV secretion systems as host adaptability factors.</title>
        <authorList>
            <person name="Saenz H.L."/>
            <person name="Engel P."/>
            <person name="Stoeckli M.C."/>
            <person name="Lanz C."/>
            <person name="Raddatz G."/>
            <person name="Vayssier-Taussat M."/>
            <person name="Birtles R."/>
            <person name="Schuster S.C."/>
            <person name="Dehio C."/>
        </authorList>
    </citation>
    <scope>NUCLEOTIDE SEQUENCE [LARGE SCALE GENOMIC DNA]</scope>
    <source>
        <strain>CIP 105476 / IBS 506</strain>
    </source>
</reference>
<organism>
    <name type="scientific">Bartonella tribocorum (strain CIP 105476 / IBS 506)</name>
    <dbReference type="NCBI Taxonomy" id="382640"/>
    <lineage>
        <taxon>Bacteria</taxon>
        <taxon>Pseudomonadati</taxon>
        <taxon>Pseudomonadota</taxon>
        <taxon>Alphaproteobacteria</taxon>
        <taxon>Hyphomicrobiales</taxon>
        <taxon>Bartonellaceae</taxon>
        <taxon>Bartonella</taxon>
    </lineage>
</organism>
<sequence length="155" mass="17426">MASQQKVVEIYTDGACSGNPGVGGWGAILRWNGHERELYGGNAHTTNNQMELMAAICALKALKEPCLVDLYTDSVYVRNGISKWIEGWKKNNWRTASKSPVKNMELWQTLEDACSCHAVRWHWVKGHAGHPENERADALARKAIAQYRENGRFPT</sequence>
<evidence type="ECO:0000255" key="1">
    <source>
        <dbReference type="HAMAP-Rule" id="MF_00042"/>
    </source>
</evidence>
<evidence type="ECO:0000255" key="2">
    <source>
        <dbReference type="PROSITE-ProRule" id="PRU00408"/>
    </source>
</evidence>
<accession>A9IQR5</accession>
<keyword id="KW-0963">Cytoplasm</keyword>
<keyword id="KW-0255">Endonuclease</keyword>
<keyword id="KW-0378">Hydrolase</keyword>
<keyword id="KW-0460">Magnesium</keyword>
<keyword id="KW-0479">Metal-binding</keyword>
<keyword id="KW-0540">Nuclease</keyword>
<protein>
    <recommendedName>
        <fullName evidence="1">Ribonuclease H</fullName>
        <shortName evidence="1">RNase H</shortName>
        <ecNumber evidence="1">3.1.26.4</ecNumber>
    </recommendedName>
</protein>
<proteinExistence type="inferred from homology"/>